<sequence length="994" mass="109326">MERGGFGGAGRHDEEAPAMRPAPQQRYRTVESHDRAVVQMAPMEFGSSADASASAGPRYIKPGTNLRTDARMHMASSNGRSSNGSQGDSKLELFGFDSLVNILGLKRMVGEQAQASASTRDGENAGIAIGHPKETETKLDTMMGVFVPCLQNILGIIYYIRFTWIVGMGGVWQSLVLVAFCGSCTFLTTISLSAIATNGAMKGGGPYYLIGRALGPEVGVSIGLCFFLGNAVAGAMYVLGAVETFLDAVPSAEFFQESVTVVTNTFVNGTAAGNATTISTPNLHDLQVYGIIVTILLCFIVFGGVKIINKVAPAFLIPVLFSILCIYIGVFIAPRPNASKWITGLSITTLKDNWSSDYQRTNNAGVPDPNGSIYWDFNALLGLYFPAVTGIMAGSNRSASLKDTQRSIPIGTLHATISTTMMYLLSVFLFGALSTREGLLTDRLLCAAVAWPSPAVVYAGIILSTLGAALQSLTGAPRLLAAIANDDILPVLNYFKAYEGSEPHVATLFTSFICISCVIIGNLDVITPTITMFFLLCYAGVNLSCFLLDLLDAPSWRPRWKLHHWSLSLIGALLCIVIMFMISWTFTVVSLALASLIYYYVSLKGKAGDWGDGFKSAYFQLALRSLRSMGANQVHPKNWYPIPLIFCRPWGKLPEDVPCHPKLADFANCMKKKGRGMSIFVSIIDGDYHESAEDAKTACRQLSAYIDYRRCEGVAEIIVAPSTSIGFRSIVQTMGLGNLKPNIVVMRYPEIWRRENLTQIPSTFVSIINDCITANKAVVIVKGLDEWPNEYQRQYGTIDLYWIVRDGGLMLLLSQLLLTKESFESCKIQVFCIAEEDTEAEELKADVKKFLYDLRMQADVIVVTVKSWEADPDRSGGSKKDDPEVYRSAQSRIRTYISQLKEAAERERRPLMEGGKQVVVDEQKVEKFLYTMLKLNATILRHSRMAVVVLVSLPPPPLNHLAYCYMEYMDLLVENIPRILIVRGYRRDVVTLFT</sequence>
<proteinExistence type="evidence at transcript level"/>
<dbReference type="EMBL" id="AP002871">
    <property type="protein sequence ID" value="BAD44902.1"/>
    <property type="status" value="ALT_SEQ"/>
    <property type="molecule type" value="Genomic_DNA"/>
</dbReference>
<dbReference type="EMBL" id="AP002871">
    <property type="protein sequence ID" value="BAD44903.1"/>
    <property type="status" value="ALT_SEQ"/>
    <property type="molecule type" value="Genomic_DNA"/>
</dbReference>
<dbReference type="EMBL" id="AP008207">
    <property type="protein sequence ID" value="BAF04751.2"/>
    <property type="status" value="ALT_SEQ"/>
    <property type="molecule type" value="Genomic_DNA"/>
</dbReference>
<dbReference type="EMBL" id="AP014957">
    <property type="status" value="NOT_ANNOTATED_CDS"/>
    <property type="molecule type" value="Genomic_DNA"/>
</dbReference>
<dbReference type="EMBL" id="BN000835">
    <property type="protein sequence ID" value="CAJ40614.1"/>
    <property type="molecule type" value="mRNA"/>
</dbReference>
<dbReference type="RefSeq" id="XP_015632062.1">
    <property type="nucleotide sequence ID" value="XM_015776576.1"/>
</dbReference>
<dbReference type="SMR" id="Q657W3"/>
<dbReference type="FunCoup" id="Q657W3">
    <property type="interactions" value="1826"/>
</dbReference>
<dbReference type="STRING" id="39947.Q657W3"/>
<dbReference type="GlyCosmos" id="Q657W3">
    <property type="glycosylation" value="5 sites, No reported glycans"/>
</dbReference>
<dbReference type="PaxDb" id="39947-Q657W3"/>
<dbReference type="KEGG" id="dosa:Os01g0304100"/>
<dbReference type="eggNOG" id="KOG2082">
    <property type="taxonomic scope" value="Eukaryota"/>
</dbReference>
<dbReference type="InParanoid" id="Q657W3"/>
<dbReference type="OrthoDB" id="2020542at2759"/>
<dbReference type="Proteomes" id="UP000000763">
    <property type="component" value="Chromosome 1"/>
</dbReference>
<dbReference type="Proteomes" id="UP000059680">
    <property type="component" value="Chromosome 1"/>
</dbReference>
<dbReference type="GO" id="GO:0016020">
    <property type="term" value="C:membrane"/>
    <property type="evidence" value="ECO:0007669"/>
    <property type="project" value="UniProtKB-SubCell"/>
</dbReference>
<dbReference type="GO" id="GO:0015377">
    <property type="term" value="F:chloride:monoatomic cation symporter activity"/>
    <property type="evidence" value="ECO:0007669"/>
    <property type="project" value="InterPro"/>
</dbReference>
<dbReference type="GO" id="GO:0006813">
    <property type="term" value="P:potassium ion transport"/>
    <property type="evidence" value="ECO:0007669"/>
    <property type="project" value="UniProtKB-KW"/>
</dbReference>
<dbReference type="FunFam" id="1.20.1740.10:FF:000021">
    <property type="entry name" value="Cation-chloride cotransporter 1"/>
    <property type="match status" value="1"/>
</dbReference>
<dbReference type="Gene3D" id="1.20.1740.10">
    <property type="entry name" value="Amino acid/polyamine transporter I"/>
    <property type="match status" value="1"/>
</dbReference>
<dbReference type="InterPro" id="IPR004841">
    <property type="entry name" value="AA-permease/SLC12A_dom"/>
</dbReference>
<dbReference type="InterPro" id="IPR018491">
    <property type="entry name" value="SLC12_C"/>
</dbReference>
<dbReference type="InterPro" id="IPR004842">
    <property type="entry name" value="SLC12A_fam"/>
</dbReference>
<dbReference type="PANTHER" id="PTHR11827:SF68">
    <property type="entry name" value="CATION-CHLORIDE COTRANSPORTER 2"/>
    <property type="match status" value="1"/>
</dbReference>
<dbReference type="PANTHER" id="PTHR11827">
    <property type="entry name" value="SOLUTE CARRIER FAMILY 12, CATION COTRANSPORTERS"/>
    <property type="match status" value="1"/>
</dbReference>
<dbReference type="Pfam" id="PF00324">
    <property type="entry name" value="AA_permease"/>
    <property type="match status" value="1"/>
</dbReference>
<dbReference type="Pfam" id="PF03522">
    <property type="entry name" value="SLC12"/>
    <property type="match status" value="2"/>
</dbReference>
<reference key="1">
    <citation type="journal article" date="2002" name="Nature">
        <title>The genome sequence and structure of rice chromosome 1.</title>
        <authorList>
            <person name="Sasaki T."/>
            <person name="Matsumoto T."/>
            <person name="Yamamoto K."/>
            <person name="Sakata K."/>
            <person name="Baba T."/>
            <person name="Katayose Y."/>
            <person name="Wu J."/>
            <person name="Niimura Y."/>
            <person name="Cheng Z."/>
            <person name="Nagamura Y."/>
            <person name="Antonio B.A."/>
            <person name="Kanamori H."/>
            <person name="Hosokawa S."/>
            <person name="Masukawa M."/>
            <person name="Arikawa K."/>
            <person name="Chiden Y."/>
            <person name="Hayashi M."/>
            <person name="Okamoto M."/>
            <person name="Ando T."/>
            <person name="Aoki H."/>
            <person name="Arita K."/>
            <person name="Hamada M."/>
            <person name="Harada C."/>
            <person name="Hijishita S."/>
            <person name="Honda M."/>
            <person name="Ichikawa Y."/>
            <person name="Idonuma A."/>
            <person name="Iijima M."/>
            <person name="Ikeda M."/>
            <person name="Ikeno M."/>
            <person name="Ito S."/>
            <person name="Ito T."/>
            <person name="Ito Y."/>
            <person name="Ito Y."/>
            <person name="Iwabuchi A."/>
            <person name="Kamiya K."/>
            <person name="Karasawa W."/>
            <person name="Katagiri S."/>
            <person name="Kikuta A."/>
            <person name="Kobayashi N."/>
            <person name="Kono I."/>
            <person name="Machita K."/>
            <person name="Maehara T."/>
            <person name="Mizuno H."/>
            <person name="Mizubayashi T."/>
            <person name="Mukai Y."/>
            <person name="Nagasaki H."/>
            <person name="Nakashima M."/>
            <person name="Nakama Y."/>
            <person name="Nakamichi Y."/>
            <person name="Nakamura M."/>
            <person name="Namiki N."/>
            <person name="Negishi M."/>
            <person name="Ohta I."/>
            <person name="Ono N."/>
            <person name="Saji S."/>
            <person name="Sakai K."/>
            <person name="Shibata M."/>
            <person name="Shimokawa T."/>
            <person name="Shomura A."/>
            <person name="Song J."/>
            <person name="Takazaki Y."/>
            <person name="Terasawa K."/>
            <person name="Tsuji K."/>
            <person name="Waki K."/>
            <person name="Yamagata H."/>
            <person name="Yamane H."/>
            <person name="Yoshiki S."/>
            <person name="Yoshihara R."/>
            <person name="Yukawa K."/>
            <person name="Zhong H."/>
            <person name="Iwama H."/>
            <person name="Endo T."/>
            <person name="Ito H."/>
            <person name="Hahn J.H."/>
            <person name="Kim H.-I."/>
            <person name="Eun M.-Y."/>
            <person name="Yano M."/>
            <person name="Jiang J."/>
            <person name="Gojobori T."/>
        </authorList>
    </citation>
    <scope>NUCLEOTIDE SEQUENCE [LARGE SCALE GENOMIC DNA]</scope>
    <source>
        <strain>cv. Nipponbare</strain>
    </source>
</reference>
<reference key="2">
    <citation type="journal article" date="2005" name="Nature">
        <title>The map-based sequence of the rice genome.</title>
        <authorList>
            <consortium name="International rice genome sequencing project (IRGSP)"/>
        </authorList>
    </citation>
    <scope>NUCLEOTIDE SEQUENCE [LARGE SCALE GENOMIC DNA]</scope>
    <source>
        <strain>cv. Nipponbare</strain>
    </source>
</reference>
<reference key="3">
    <citation type="journal article" date="2008" name="Nucleic Acids Res.">
        <title>The rice annotation project database (RAP-DB): 2008 update.</title>
        <authorList>
            <consortium name="The rice annotation project (RAP)"/>
        </authorList>
    </citation>
    <scope>GENOME REANNOTATION</scope>
    <source>
        <strain>cv. Nipponbare</strain>
    </source>
</reference>
<reference key="4">
    <citation type="journal article" date="2013" name="Rice">
        <title>Improvement of the Oryza sativa Nipponbare reference genome using next generation sequence and optical map data.</title>
        <authorList>
            <person name="Kawahara Y."/>
            <person name="de la Bastide M."/>
            <person name="Hamilton J.P."/>
            <person name="Kanamori H."/>
            <person name="McCombie W.R."/>
            <person name="Ouyang S."/>
            <person name="Schwartz D.C."/>
            <person name="Tanaka T."/>
            <person name="Wu J."/>
            <person name="Zhou S."/>
            <person name="Childs K.L."/>
            <person name="Davidson R.M."/>
            <person name="Lin H."/>
            <person name="Quesada-Ocampo L."/>
            <person name="Vaillancourt B."/>
            <person name="Sakai H."/>
            <person name="Lee S.S."/>
            <person name="Kim J."/>
            <person name="Numa H."/>
            <person name="Itoh T."/>
            <person name="Buell C.R."/>
            <person name="Matsumoto T."/>
        </authorList>
    </citation>
    <scope>GENOME REANNOTATION</scope>
    <source>
        <strain>cv. Nipponbare</strain>
    </source>
</reference>
<reference key="5">
    <citation type="journal article" date="2007" name="Plant J.">
        <title>Identification and functional characterization of cation-chloride cotransporters in plants.</title>
        <authorList>
            <person name="Colmenero-Flores J.M."/>
            <person name="Martinez G."/>
            <person name="Gamba G."/>
            <person name="Vazquez N."/>
            <person name="Iglesias D.J."/>
            <person name="Brumos J."/>
            <person name="Talon M."/>
        </authorList>
    </citation>
    <scope>IDENTIFICATION</scope>
</reference>
<comment type="function">
    <text evidence="1">Probable cation/chloride cotransporter.</text>
</comment>
<comment type="subcellular location">
    <subcellularLocation>
        <location evidence="4">Membrane</location>
        <topology evidence="4">Multi-pass membrane protein</topology>
    </subcellularLocation>
</comment>
<comment type="similarity">
    <text evidence="4">Belongs to the SLC12A transporter family.</text>
</comment>
<comment type="sequence caution" evidence="4">
    <conflict type="erroneous gene model prediction">
        <sequence resource="EMBL-CDS" id="BAD44902"/>
    </conflict>
</comment>
<comment type="sequence caution" evidence="4">
    <conflict type="erroneous gene model prediction">
        <sequence resource="EMBL-CDS" id="BAD44903"/>
    </conflict>
</comment>
<comment type="sequence caution" evidence="4">
    <conflict type="erroneous gene model prediction">
        <sequence resource="EMBL-CDS" id="BAF04751"/>
    </conflict>
</comment>
<accession>Q657W3</accession>
<accession>A4VCJ9</accession>
<accession>Q0JNC7</accession>
<accession>Q657W2</accession>
<name>CCC2_ORYSJ</name>
<gene>
    <name type="primary">CCC2</name>
    <name type="synonym">KCC2</name>
    <name type="ordered locus">Os01g0304100</name>
    <name type="ordered locus">LOC_Os01g19850</name>
    <name type="ORF">P0475H04.13</name>
    <name type="ORF">P0475H04.14</name>
</gene>
<feature type="chain" id="PRO_0000410468" description="Cation-chloride cotransporter 2">
    <location>
        <begin position="1"/>
        <end position="994"/>
    </location>
</feature>
<feature type="topological domain" description="Cytoplasmic" evidence="2">
    <location>
        <begin position="1"/>
        <end position="139"/>
    </location>
</feature>
<feature type="transmembrane region" description="Helical" evidence="2">
    <location>
        <begin position="140"/>
        <end position="160"/>
    </location>
</feature>
<feature type="topological domain" description="Extracellular" evidence="2">
    <location>
        <begin position="161"/>
        <end position="174"/>
    </location>
</feature>
<feature type="transmembrane region" description="Helical" evidence="2">
    <location>
        <begin position="175"/>
        <end position="195"/>
    </location>
</feature>
<feature type="topological domain" description="Cytoplasmic" evidence="2">
    <location>
        <begin position="196"/>
        <end position="221"/>
    </location>
</feature>
<feature type="transmembrane region" description="Helical" evidence="2">
    <location>
        <begin position="222"/>
        <end position="242"/>
    </location>
</feature>
<feature type="topological domain" description="Extracellular" evidence="2">
    <location>
        <begin position="243"/>
        <end position="287"/>
    </location>
</feature>
<feature type="transmembrane region" description="Helical" evidence="2">
    <location>
        <begin position="288"/>
        <end position="308"/>
    </location>
</feature>
<feature type="topological domain" description="Cytoplasmic" evidence="2">
    <location>
        <begin position="309"/>
        <end position="311"/>
    </location>
</feature>
<feature type="transmembrane region" description="Helical" evidence="2">
    <location>
        <begin position="312"/>
        <end position="332"/>
    </location>
</feature>
<feature type="topological domain" description="Extracellular" evidence="2">
    <location>
        <begin position="333"/>
        <end position="372"/>
    </location>
</feature>
<feature type="transmembrane region" description="Helical" evidence="2">
    <location>
        <begin position="373"/>
        <end position="393"/>
    </location>
</feature>
<feature type="topological domain" description="Cytoplasmic" evidence="2">
    <location>
        <begin position="394"/>
        <end position="412"/>
    </location>
</feature>
<feature type="transmembrane region" description="Helical" evidence="2">
    <location>
        <begin position="413"/>
        <end position="433"/>
    </location>
</feature>
<feature type="topological domain" description="Extracellular" evidence="2">
    <location>
        <begin position="434"/>
        <end position="448"/>
    </location>
</feature>
<feature type="transmembrane region" description="Helical" evidence="2">
    <location>
        <begin position="449"/>
        <end position="469"/>
    </location>
</feature>
<feature type="topological domain" description="Cytoplasmic" evidence="2">
    <location>
        <begin position="470"/>
        <end position="505"/>
    </location>
</feature>
<feature type="transmembrane region" description="Helical" evidence="2">
    <location>
        <begin position="506"/>
        <end position="526"/>
    </location>
</feature>
<feature type="topological domain" description="Extracellular" evidence="2">
    <location>
        <begin position="527"/>
        <end position="529"/>
    </location>
</feature>
<feature type="transmembrane region" description="Helical" evidence="2">
    <location>
        <begin position="530"/>
        <end position="552"/>
    </location>
</feature>
<feature type="topological domain" description="Cytoplasmic" evidence="2">
    <location>
        <begin position="553"/>
        <end position="558"/>
    </location>
</feature>
<feature type="transmembrane region" description="Helical" evidence="2">
    <location>
        <begin position="559"/>
        <end position="579"/>
    </location>
</feature>
<feature type="topological domain" description="Extracellular" evidence="2">
    <location>
        <begin position="580"/>
        <end position="585"/>
    </location>
</feature>
<feature type="transmembrane region" description="Helical" evidence="2">
    <location>
        <begin position="586"/>
        <end position="606"/>
    </location>
</feature>
<feature type="topological domain" description="Cytoplasmic" evidence="2">
    <location>
        <begin position="607"/>
        <end position="994"/>
    </location>
</feature>
<feature type="region of interest" description="Disordered" evidence="3">
    <location>
        <begin position="1"/>
        <end position="28"/>
    </location>
</feature>
<feature type="glycosylation site" description="N-linked (GlcNAc...) asparagine" evidence="2">
    <location>
        <position position="268"/>
    </location>
</feature>
<feature type="glycosylation site" description="N-linked (GlcNAc...) asparagine" evidence="2">
    <location>
        <position position="274"/>
    </location>
</feature>
<feature type="glycosylation site" description="N-linked (GlcNAc...) asparagine" evidence="2">
    <location>
        <position position="337"/>
    </location>
</feature>
<feature type="glycosylation site" description="N-linked (GlcNAc...) asparagine" evidence="2">
    <location>
        <position position="353"/>
    </location>
</feature>
<feature type="glycosylation site" description="N-linked (GlcNAc...) asparagine" evidence="2">
    <location>
        <position position="370"/>
    </location>
</feature>
<keyword id="KW-0325">Glycoprotein</keyword>
<keyword id="KW-0406">Ion transport</keyword>
<keyword id="KW-0472">Membrane</keyword>
<keyword id="KW-0630">Potassium</keyword>
<keyword id="KW-0633">Potassium transport</keyword>
<keyword id="KW-1185">Reference proteome</keyword>
<keyword id="KW-0769">Symport</keyword>
<keyword id="KW-0812">Transmembrane</keyword>
<keyword id="KW-1133">Transmembrane helix</keyword>
<keyword id="KW-0813">Transport</keyword>
<organism>
    <name type="scientific">Oryza sativa subsp. japonica</name>
    <name type="common">Rice</name>
    <dbReference type="NCBI Taxonomy" id="39947"/>
    <lineage>
        <taxon>Eukaryota</taxon>
        <taxon>Viridiplantae</taxon>
        <taxon>Streptophyta</taxon>
        <taxon>Embryophyta</taxon>
        <taxon>Tracheophyta</taxon>
        <taxon>Spermatophyta</taxon>
        <taxon>Magnoliopsida</taxon>
        <taxon>Liliopsida</taxon>
        <taxon>Poales</taxon>
        <taxon>Poaceae</taxon>
        <taxon>BOP clade</taxon>
        <taxon>Oryzoideae</taxon>
        <taxon>Oryzeae</taxon>
        <taxon>Oryzinae</taxon>
        <taxon>Oryza</taxon>
        <taxon>Oryza sativa</taxon>
    </lineage>
</organism>
<evidence type="ECO:0000250" key="1"/>
<evidence type="ECO:0000255" key="2"/>
<evidence type="ECO:0000256" key="3">
    <source>
        <dbReference type="SAM" id="MobiDB-lite"/>
    </source>
</evidence>
<evidence type="ECO:0000305" key="4"/>
<protein>
    <recommendedName>
        <fullName>Cation-chloride cotransporter 2</fullName>
        <shortName>OsCCC2</shortName>
    </recommendedName>
    <alternativeName>
        <fullName>Potassium-chloride cotransporter 2</fullName>
    </alternativeName>
</protein>